<comment type="function">
    <text evidence="1">DNA-dependent RNA polymerase (RNAP) catalyzes the transcription of DNA into RNA using the four ribonucleoside triphosphates as substrates. The Rpo2 subunit (Rpo2N and Rpo2C in this organism) is implicated in DNA promoter recognition and in nucleotide binding.</text>
</comment>
<comment type="catalytic activity">
    <reaction evidence="2">
        <text>RNA(n) + a ribonucleoside 5'-triphosphate = RNA(n+1) + diphosphate</text>
        <dbReference type="Rhea" id="RHEA:21248"/>
        <dbReference type="Rhea" id="RHEA-COMP:14527"/>
        <dbReference type="Rhea" id="RHEA-COMP:17342"/>
        <dbReference type="ChEBI" id="CHEBI:33019"/>
        <dbReference type="ChEBI" id="CHEBI:61557"/>
        <dbReference type="ChEBI" id="CHEBI:140395"/>
        <dbReference type="EC" id="2.7.7.6"/>
    </reaction>
</comment>
<comment type="subunit">
    <text evidence="1">Part of the RNA polymerase complex.</text>
</comment>
<comment type="subcellular location">
    <subcellularLocation>
        <location evidence="1">Cytoplasm</location>
    </subcellularLocation>
</comment>
<comment type="similarity">
    <text evidence="4">Belongs to the RNA polymerase beta chain family.</text>
</comment>
<feature type="chain" id="PRO_0000074035" description="DNA-directed RNA polymerase subunit Rpo2N">
    <location>
        <begin position="1"/>
        <end position="499"/>
    </location>
</feature>
<evidence type="ECO:0000250" key="1">
    <source>
        <dbReference type="UniProtKB" id="B8YB55"/>
    </source>
</evidence>
<evidence type="ECO:0000250" key="2">
    <source>
        <dbReference type="UniProtKB" id="P11513"/>
    </source>
</evidence>
<evidence type="ECO:0000303" key="3">
    <source ref="1"/>
</evidence>
<evidence type="ECO:0000305" key="4"/>
<protein>
    <recommendedName>
        <fullName evidence="4">DNA-directed RNA polymerase subunit Rpo2N</fullName>
        <ecNumber evidence="2">2.7.7.6</ecNumber>
    </recommendedName>
    <alternativeName>
        <fullName evidence="3">DNA-directed RNA polymerase subunit B''</fullName>
    </alternativeName>
</protein>
<keyword id="KW-0963">Cytoplasm</keyword>
<keyword id="KW-0238">DNA-binding</keyword>
<keyword id="KW-0240">DNA-directed RNA polymerase</keyword>
<keyword id="KW-0548">Nucleotidyltransferase</keyword>
<keyword id="KW-0804">Transcription</keyword>
<keyword id="KW-0808">Transferase</keyword>
<sequence length="499" mass="55900">MESRVIVDAFFRENSLVKHHIDSYDDFVENKIQGIIDEVTGVETEIKGGYKVSFGKVRVTKPINKEADGSVKEITPMEARIRNLAYSAPLYLEMIPLIGEGDEEKTLSPIEVYIGELPVMLGAKICHLSGKSEEDMINYGEDPKDPLGYFIVNGSEKAVVAQEDLIPNRILCEKVEKNNKIVDIAKVFSTRHGFRALCTVERSPDGLLNVSFPGMPSTIPLVILMRALGAESDREIMELISDEPTVVMQLVANLQEAREEHGINTTEDALEHIGKRVAPGQPKEYKLKRAETILCNYLLPHMGIESEKLGAKCKYLGRMAKNSIELYLGSRVEDDKDHYANKRLKLAGDLMEDLFRHSFNQLIKDIKYQLERQAIRNKEPSIQAAVRSDVLTERMRHAMATGNWVGGRTGVSQLLDRTSYLATVSQLRRVVSPLSRSQPHFEARDLHATQWGKICPSETPEGPNCGLVKNLAVMCKVTTDEEDEGIIQLIKEIGLSKDI</sequence>
<proteinExistence type="inferred from homology"/>
<dbReference type="EC" id="2.7.7.6" evidence="2"/>
<dbReference type="EMBL" id="X73293">
    <property type="protein sequence ID" value="CAA51726.1"/>
    <property type="molecule type" value="Genomic_DNA"/>
</dbReference>
<dbReference type="EMBL" id="CP000742">
    <property type="protein sequence ID" value="ABR54577.1"/>
    <property type="molecule type" value="Genomic_DNA"/>
</dbReference>
<dbReference type="PIR" id="S47160">
    <property type="entry name" value="S47160"/>
</dbReference>
<dbReference type="RefSeq" id="WP_011972479.1">
    <property type="nucleotide sequence ID" value="NC_009634.1"/>
</dbReference>
<dbReference type="SMR" id="P41558"/>
<dbReference type="STRING" id="406327.Mevan_0671"/>
<dbReference type="GeneID" id="5325115"/>
<dbReference type="KEGG" id="mvn:Mevan_0671"/>
<dbReference type="eggNOG" id="arCOG01762">
    <property type="taxonomic scope" value="Archaea"/>
</dbReference>
<dbReference type="HOGENOM" id="CLU_000524_5_3_2"/>
<dbReference type="OrthoDB" id="371768at2157"/>
<dbReference type="Proteomes" id="UP000001107">
    <property type="component" value="Chromosome"/>
</dbReference>
<dbReference type="GO" id="GO:0005737">
    <property type="term" value="C:cytoplasm"/>
    <property type="evidence" value="ECO:0007669"/>
    <property type="project" value="UniProtKB-SubCell"/>
</dbReference>
<dbReference type="GO" id="GO:0000428">
    <property type="term" value="C:DNA-directed RNA polymerase complex"/>
    <property type="evidence" value="ECO:0007669"/>
    <property type="project" value="UniProtKB-KW"/>
</dbReference>
<dbReference type="GO" id="GO:0003677">
    <property type="term" value="F:DNA binding"/>
    <property type="evidence" value="ECO:0007669"/>
    <property type="project" value="UniProtKB-KW"/>
</dbReference>
<dbReference type="GO" id="GO:0003899">
    <property type="term" value="F:DNA-directed RNA polymerase activity"/>
    <property type="evidence" value="ECO:0007669"/>
    <property type="project" value="UniProtKB-EC"/>
</dbReference>
<dbReference type="GO" id="GO:0032549">
    <property type="term" value="F:ribonucleoside binding"/>
    <property type="evidence" value="ECO:0007669"/>
    <property type="project" value="InterPro"/>
</dbReference>
<dbReference type="GO" id="GO:0006351">
    <property type="term" value="P:DNA-templated transcription"/>
    <property type="evidence" value="ECO:0007669"/>
    <property type="project" value="InterPro"/>
</dbReference>
<dbReference type="Gene3D" id="3.90.1100.10">
    <property type="match status" value="1"/>
</dbReference>
<dbReference type="Gene3D" id="3.90.1110.10">
    <property type="entry name" value="RNA polymerase Rpb2, domain 2"/>
    <property type="match status" value="1"/>
</dbReference>
<dbReference type="InterPro" id="IPR015712">
    <property type="entry name" value="DNA-dir_RNA_pol_su2"/>
</dbReference>
<dbReference type="InterPro" id="IPR007644">
    <property type="entry name" value="RNA_pol_bsu_protrusion"/>
</dbReference>
<dbReference type="InterPro" id="IPR007642">
    <property type="entry name" value="RNA_pol_Rpb2_2"/>
</dbReference>
<dbReference type="InterPro" id="IPR037034">
    <property type="entry name" value="RNA_pol_Rpb2_2_sf"/>
</dbReference>
<dbReference type="InterPro" id="IPR007645">
    <property type="entry name" value="RNA_pol_Rpb2_3"/>
</dbReference>
<dbReference type="NCBIfam" id="NF007175">
    <property type="entry name" value="PRK09606.1"/>
    <property type="match status" value="1"/>
</dbReference>
<dbReference type="PANTHER" id="PTHR20856">
    <property type="entry name" value="DNA-DIRECTED RNA POLYMERASE I SUBUNIT 2"/>
    <property type="match status" value="1"/>
</dbReference>
<dbReference type="Pfam" id="PF04563">
    <property type="entry name" value="RNA_pol_Rpb2_1"/>
    <property type="match status" value="1"/>
</dbReference>
<dbReference type="Pfam" id="PF04561">
    <property type="entry name" value="RNA_pol_Rpb2_2"/>
    <property type="match status" value="1"/>
</dbReference>
<dbReference type="Pfam" id="PF04565">
    <property type="entry name" value="RNA_pol_Rpb2_3"/>
    <property type="match status" value="1"/>
</dbReference>
<dbReference type="SUPFAM" id="SSF64484">
    <property type="entry name" value="beta and beta-prime subunits of DNA dependent RNA-polymerase"/>
    <property type="match status" value="1"/>
</dbReference>
<accession>P41558</accession>
<accession>A6UQ05</accession>
<name>RPO2N_METVS</name>
<reference key="1">
    <citation type="submission" date="1993-06" db="EMBL/GenBank/DDBJ databases">
        <title>DNA sequence of the genes of the large subunits of the DNA dependent RNA-polymerase of Methanococcus vannielii.</title>
        <authorList>
            <person name="Palm P."/>
            <person name="Arnold-Ammer I."/>
            <person name="Lechner K.A."/>
            <person name="Zillig W."/>
        </authorList>
    </citation>
    <scope>NUCLEOTIDE SEQUENCE [GENOMIC DNA]</scope>
</reference>
<reference key="2">
    <citation type="submission" date="2007-06" db="EMBL/GenBank/DDBJ databases">
        <title>Complete sequence of Methanococcus vannielii SB.</title>
        <authorList>
            <consortium name="US DOE Joint Genome Institute"/>
            <person name="Copeland A."/>
            <person name="Lucas S."/>
            <person name="Lapidus A."/>
            <person name="Barry K."/>
            <person name="Glavina del Rio T."/>
            <person name="Dalin E."/>
            <person name="Tice H."/>
            <person name="Pitluck S."/>
            <person name="Chain P."/>
            <person name="Malfatti S."/>
            <person name="Shin M."/>
            <person name="Vergez L."/>
            <person name="Schmutz J."/>
            <person name="Larimer F."/>
            <person name="Land M."/>
            <person name="Hauser L."/>
            <person name="Kyrpides N."/>
            <person name="Anderson I."/>
            <person name="Sieprawska-Lupa M."/>
            <person name="Whitman W.B."/>
            <person name="Richardson P."/>
        </authorList>
    </citation>
    <scope>NUCLEOTIDE SEQUENCE [LARGE SCALE GENOMIC DNA]</scope>
    <source>
        <strain>ATCC 35089 / DSM 1224 / JCM 13029 / OCM 148 / SB</strain>
    </source>
</reference>
<gene>
    <name evidence="4" type="primary">rpo2N</name>
    <name type="synonym">rpoB2</name>
    <name type="ordered locus">Mevan_0671</name>
</gene>
<organism>
    <name type="scientific">Methanococcus vannielii (strain ATCC 35089 / DSM 1224 / JCM 13029 / OCM 148 / SB)</name>
    <dbReference type="NCBI Taxonomy" id="406327"/>
    <lineage>
        <taxon>Archaea</taxon>
        <taxon>Methanobacteriati</taxon>
        <taxon>Methanobacteriota</taxon>
        <taxon>Methanomada group</taxon>
        <taxon>Methanococci</taxon>
        <taxon>Methanococcales</taxon>
        <taxon>Methanococcaceae</taxon>
        <taxon>Methanococcus</taxon>
    </lineage>
</organism>